<name>SYY_NITMU</name>
<sequence length="403" mass="45311">MTIPISEQIEIIKRGCSELLLEDELEQKLAQNRPLRIKAGFDPTAPDLHLGHTVLLNKMRHLQDLGHHALFLIGDFTGMIGDPSGKNTTRPPLSREQVAENAKSYQDQVFRILKPEQTEVVFNSAWMDRLNAADLIKLAATHTVARMLERDDFGKRYQSNKPIAIHEFLYPLIQGYDSVALRADIELGGTDQKFNLLMGRELQKHFGQASQCVITMPLLEGLDGVNKMSKSAGNYIGITESPGNMFGKLMSISDELMWRYIELLSFEPLRVVRQWQQDVGNGRNPRDIKVLFAQEIVTRFHSRQDAEAALADFESRFRRGGIPDDLPENILQAGKEGLPIAQLLKQTGLTASTTEALRMIEQGGVKLNGEKVSDKTFRLSCGQMVIVQVGKRKFARVTICEEK</sequence>
<dbReference type="EC" id="6.1.1.1" evidence="1"/>
<dbReference type="EMBL" id="CP000103">
    <property type="protein sequence ID" value="ABB73810.1"/>
    <property type="molecule type" value="Genomic_DNA"/>
</dbReference>
<dbReference type="RefSeq" id="WP_011379864.1">
    <property type="nucleotide sequence ID" value="NC_007614.1"/>
</dbReference>
<dbReference type="SMR" id="Q2YBR1"/>
<dbReference type="STRING" id="323848.Nmul_A0502"/>
<dbReference type="KEGG" id="nmu:Nmul_A0502"/>
<dbReference type="eggNOG" id="COG0162">
    <property type="taxonomic scope" value="Bacteria"/>
</dbReference>
<dbReference type="HOGENOM" id="CLU_024003_5_0_4"/>
<dbReference type="OrthoDB" id="9804243at2"/>
<dbReference type="Proteomes" id="UP000002718">
    <property type="component" value="Chromosome"/>
</dbReference>
<dbReference type="GO" id="GO:0005829">
    <property type="term" value="C:cytosol"/>
    <property type="evidence" value="ECO:0007669"/>
    <property type="project" value="TreeGrafter"/>
</dbReference>
<dbReference type="GO" id="GO:0005524">
    <property type="term" value="F:ATP binding"/>
    <property type="evidence" value="ECO:0007669"/>
    <property type="project" value="UniProtKB-UniRule"/>
</dbReference>
<dbReference type="GO" id="GO:0003723">
    <property type="term" value="F:RNA binding"/>
    <property type="evidence" value="ECO:0007669"/>
    <property type="project" value="UniProtKB-KW"/>
</dbReference>
<dbReference type="GO" id="GO:0004831">
    <property type="term" value="F:tyrosine-tRNA ligase activity"/>
    <property type="evidence" value="ECO:0007669"/>
    <property type="project" value="UniProtKB-UniRule"/>
</dbReference>
<dbReference type="GO" id="GO:0006437">
    <property type="term" value="P:tyrosyl-tRNA aminoacylation"/>
    <property type="evidence" value="ECO:0007669"/>
    <property type="project" value="UniProtKB-UniRule"/>
</dbReference>
<dbReference type="CDD" id="cd00165">
    <property type="entry name" value="S4"/>
    <property type="match status" value="1"/>
</dbReference>
<dbReference type="CDD" id="cd00805">
    <property type="entry name" value="TyrRS_core"/>
    <property type="match status" value="1"/>
</dbReference>
<dbReference type="FunFam" id="1.10.240.10:FF:000006">
    <property type="entry name" value="Tyrosine--tRNA ligase"/>
    <property type="match status" value="1"/>
</dbReference>
<dbReference type="FunFam" id="3.10.290.10:FF:000022">
    <property type="entry name" value="Tyrosine--tRNA ligase"/>
    <property type="match status" value="1"/>
</dbReference>
<dbReference type="FunFam" id="3.40.50.620:FF:000061">
    <property type="entry name" value="Tyrosine--tRNA ligase"/>
    <property type="match status" value="1"/>
</dbReference>
<dbReference type="Gene3D" id="3.40.50.620">
    <property type="entry name" value="HUPs"/>
    <property type="match status" value="1"/>
</dbReference>
<dbReference type="Gene3D" id="3.10.290.10">
    <property type="entry name" value="RNA-binding S4 domain"/>
    <property type="match status" value="1"/>
</dbReference>
<dbReference type="Gene3D" id="1.10.240.10">
    <property type="entry name" value="Tyrosyl-Transfer RNA Synthetase"/>
    <property type="match status" value="1"/>
</dbReference>
<dbReference type="HAMAP" id="MF_02007">
    <property type="entry name" value="Tyr_tRNA_synth_type2"/>
    <property type="match status" value="1"/>
</dbReference>
<dbReference type="InterPro" id="IPR001412">
    <property type="entry name" value="aa-tRNA-synth_I_CS"/>
</dbReference>
<dbReference type="InterPro" id="IPR002305">
    <property type="entry name" value="aa-tRNA-synth_Ic"/>
</dbReference>
<dbReference type="InterPro" id="IPR014729">
    <property type="entry name" value="Rossmann-like_a/b/a_fold"/>
</dbReference>
<dbReference type="InterPro" id="IPR002942">
    <property type="entry name" value="S4_RNA-bd"/>
</dbReference>
<dbReference type="InterPro" id="IPR036986">
    <property type="entry name" value="S4_RNA-bd_sf"/>
</dbReference>
<dbReference type="InterPro" id="IPR054608">
    <property type="entry name" value="SYY-like_C"/>
</dbReference>
<dbReference type="InterPro" id="IPR002307">
    <property type="entry name" value="Tyr-tRNA-ligase"/>
</dbReference>
<dbReference type="InterPro" id="IPR024088">
    <property type="entry name" value="Tyr-tRNA-ligase_bac-type"/>
</dbReference>
<dbReference type="InterPro" id="IPR024108">
    <property type="entry name" value="Tyr-tRNA-ligase_bac_2"/>
</dbReference>
<dbReference type="NCBIfam" id="TIGR00234">
    <property type="entry name" value="tyrS"/>
    <property type="match status" value="1"/>
</dbReference>
<dbReference type="PANTHER" id="PTHR11766:SF1">
    <property type="entry name" value="TYROSINE--TRNA LIGASE"/>
    <property type="match status" value="1"/>
</dbReference>
<dbReference type="PANTHER" id="PTHR11766">
    <property type="entry name" value="TYROSYL-TRNA SYNTHETASE"/>
    <property type="match status" value="1"/>
</dbReference>
<dbReference type="Pfam" id="PF22421">
    <property type="entry name" value="SYY_C-terminal"/>
    <property type="match status" value="1"/>
</dbReference>
<dbReference type="Pfam" id="PF00579">
    <property type="entry name" value="tRNA-synt_1b"/>
    <property type="match status" value="1"/>
</dbReference>
<dbReference type="PRINTS" id="PR01040">
    <property type="entry name" value="TRNASYNTHTYR"/>
</dbReference>
<dbReference type="SMART" id="SM00363">
    <property type="entry name" value="S4"/>
    <property type="match status" value="1"/>
</dbReference>
<dbReference type="SUPFAM" id="SSF55174">
    <property type="entry name" value="Alpha-L RNA-binding motif"/>
    <property type="match status" value="1"/>
</dbReference>
<dbReference type="SUPFAM" id="SSF52374">
    <property type="entry name" value="Nucleotidylyl transferase"/>
    <property type="match status" value="1"/>
</dbReference>
<dbReference type="PROSITE" id="PS00178">
    <property type="entry name" value="AA_TRNA_LIGASE_I"/>
    <property type="match status" value="1"/>
</dbReference>
<dbReference type="PROSITE" id="PS50889">
    <property type="entry name" value="S4"/>
    <property type="match status" value="1"/>
</dbReference>
<organism>
    <name type="scientific">Nitrosospira multiformis (strain ATCC 25196 / NCIMB 11849 / C 71)</name>
    <dbReference type="NCBI Taxonomy" id="323848"/>
    <lineage>
        <taxon>Bacteria</taxon>
        <taxon>Pseudomonadati</taxon>
        <taxon>Pseudomonadota</taxon>
        <taxon>Betaproteobacteria</taxon>
        <taxon>Nitrosomonadales</taxon>
        <taxon>Nitrosomonadaceae</taxon>
        <taxon>Nitrosospira</taxon>
    </lineage>
</organism>
<keyword id="KW-0030">Aminoacyl-tRNA synthetase</keyword>
<keyword id="KW-0067">ATP-binding</keyword>
<keyword id="KW-0963">Cytoplasm</keyword>
<keyword id="KW-0436">Ligase</keyword>
<keyword id="KW-0547">Nucleotide-binding</keyword>
<keyword id="KW-0648">Protein biosynthesis</keyword>
<keyword id="KW-1185">Reference proteome</keyword>
<keyword id="KW-0694">RNA-binding</keyword>
<evidence type="ECO:0000255" key="1">
    <source>
        <dbReference type="HAMAP-Rule" id="MF_02007"/>
    </source>
</evidence>
<feature type="chain" id="PRO_0000236738" description="Tyrosine--tRNA ligase">
    <location>
        <begin position="1"/>
        <end position="403"/>
    </location>
</feature>
<feature type="domain" description="S4 RNA-binding" evidence="1">
    <location>
        <begin position="338"/>
        <end position="399"/>
    </location>
</feature>
<feature type="short sequence motif" description="'HIGH' region">
    <location>
        <begin position="43"/>
        <end position="52"/>
    </location>
</feature>
<feature type="short sequence motif" description="'KMSKS' region">
    <location>
        <begin position="227"/>
        <end position="231"/>
    </location>
</feature>
<feature type="binding site" evidence="1">
    <location>
        <position position="230"/>
    </location>
    <ligand>
        <name>ATP</name>
        <dbReference type="ChEBI" id="CHEBI:30616"/>
    </ligand>
</feature>
<gene>
    <name evidence="1" type="primary">tyrS</name>
    <name type="ordered locus">Nmul_A0502</name>
</gene>
<protein>
    <recommendedName>
        <fullName evidence="1">Tyrosine--tRNA ligase</fullName>
        <ecNumber evidence="1">6.1.1.1</ecNumber>
    </recommendedName>
    <alternativeName>
        <fullName evidence="1">Tyrosyl-tRNA synthetase</fullName>
        <shortName evidence="1">TyrRS</shortName>
    </alternativeName>
</protein>
<comment type="function">
    <text evidence="1">Catalyzes the attachment of tyrosine to tRNA(Tyr) in a two-step reaction: tyrosine is first activated by ATP to form Tyr-AMP and then transferred to the acceptor end of tRNA(Tyr).</text>
</comment>
<comment type="catalytic activity">
    <reaction evidence="1">
        <text>tRNA(Tyr) + L-tyrosine + ATP = L-tyrosyl-tRNA(Tyr) + AMP + diphosphate + H(+)</text>
        <dbReference type="Rhea" id="RHEA:10220"/>
        <dbReference type="Rhea" id="RHEA-COMP:9706"/>
        <dbReference type="Rhea" id="RHEA-COMP:9707"/>
        <dbReference type="ChEBI" id="CHEBI:15378"/>
        <dbReference type="ChEBI" id="CHEBI:30616"/>
        <dbReference type="ChEBI" id="CHEBI:33019"/>
        <dbReference type="ChEBI" id="CHEBI:58315"/>
        <dbReference type="ChEBI" id="CHEBI:78442"/>
        <dbReference type="ChEBI" id="CHEBI:78536"/>
        <dbReference type="ChEBI" id="CHEBI:456215"/>
        <dbReference type="EC" id="6.1.1.1"/>
    </reaction>
</comment>
<comment type="subunit">
    <text evidence="1">Homodimer.</text>
</comment>
<comment type="subcellular location">
    <subcellularLocation>
        <location evidence="1">Cytoplasm</location>
    </subcellularLocation>
</comment>
<comment type="similarity">
    <text evidence="1">Belongs to the class-I aminoacyl-tRNA synthetase family. TyrS type 2 subfamily.</text>
</comment>
<proteinExistence type="inferred from homology"/>
<reference key="1">
    <citation type="submission" date="2005-08" db="EMBL/GenBank/DDBJ databases">
        <title>Complete sequence of chromosome 1 of Nitrosospira multiformis ATCC 25196.</title>
        <authorList>
            <person name="Copeland A."/>
            <person name="Lucas S."/>
            <person name="Lapidus A."/>
            <person name="Barry K."/>
            <person name="Detter J.C."/>
            <person name="Glavina T."/>
            <person name="Hammon N."/>
            <person name="Israni S."/>
            <person name="Pitluck S."/>
            <person name="Chain P."/>
            <person name="Malfatti S."/>
            <person name="Shin M."/>
            <person name="Vergez L."/>
            <person name="Schmutz J."/>
            <person name="Larimer F."/>
            <person name="Land M."/>
            <person name="Hauser L."/>
            <person name="Kyrpides N."/>
            <person name="Lykidis A."/>
            <person name="Richardson P."/>
        </authorList>
    </citation>
    <scope>NUCLEOTIDE SEQUENCE [LARGE SCALE GENOMIC DNA]</scope>
    <source>
        <strain>ATCC 25196 / NCIMB 11849 / C 71</strain>
    </source>
</reference>
<accession>Q2YBR1</accession>